<keyword id="KW-0067">ATP-binding</keyword>
<keyword id="KW-0963">Cytoplasm</keyword>
<keyword id="KW-0460">Magnesium</keyword>
<keyword id="KW-0479">Metal-binding</keyword>
<keyword id="KW-0547">Nucleotide-binding</keyword>
<keyword id="KW-0819">tRNA processing</keyword>
<proteinExistence type="inferred from homology"/>
<sequence>MHTLNSEKETKNFAKLFAQNLKPNDIVLLNGDLGAGKTFFCREIIKHFCGKNTNIISPTFNLLQIYKTPNFNIYHYDMYRIKSPEEIYELGFEEALNGNLILIEWSEIIKHLLTPPLIEVNLKILDNNKRLCSIKKENFLFDFL</sequence>
<name>TSAE_RICTY</name>
<organism>
    <name type="scientific">Rickettsia typhi (strain ATCC VR-144 / Wilmington)</name>
    <dbReference type="NCBI Taxonomy" id="257363"/>
    <lineage>
        <taxon>Bacteria</taxon>
        <taxon>Pseudomonadati</taxon>
        <taxon>Pseudomonadota</taxon>
        <taxon>Alphaproteobacteria</taxon>
        <taxon>Rickettsiales</taxon>
        <taxon>Rickettsiaceae</taxon>
        <taxon>Rickettsieae</taxon>
        <taxon>Rickettsia</taxon>
        <taxon>typhus group</taxon>
    </lineage>
</organism>
<gene>
    <name type="primary">tsaE</name>
    <name type="ordered locus">RT0012</name>
</gene>
<reference key="1">
    <citation type="journal article" date="2004" name="J. Bacteriol.">
        <title>Complete genome sequence of Rickettsia typhi and comparison with sequences of other Rickettsiae.</title>
        <authorList>
            <person name="McLeod M.P."/>
            <person name="Qin X."/>
            <person name="Karpathy S.E."/>
            <person name="Gioia J."/>
            <person name="Highlander S.K."/>
            <person name="Fox G.E."/>
            <person name="McNeill T.Z."/>
            <person name="Jiang H."/>
            <person name="Muzny D."/>
            <person name="Jacob L.S."/>
            <person name="Hawes A.C."/>
            <person name="Sodergren E."/>
            <person name="Gill R."/>
            <person name="Hume J."/>
            <person name="Morgan M."/>
            <person name="Fan G."/>
            <person name="Amin A.G."/>
            <person name="Gibbs R.A."/>
            <person name="Hong C."/>
            <person name="Yu X.-J."/>
            <person name="Walker D.H."/>
            <person name="Weinstock G.M."/>
        </authorList>
    </citation>
    <scope>NUCLEOTIDE SEQUENCE [LARGE SCALE GENOMIC DNA]</scope>
    <source>
        <strain>ATCC VR-144 / Wilmington</strain>
    </source>
</reference>
<protein>
    <recommendedName>
        <fullName>tRNA threonylcarbamoyladenosine biosynthesis protein TsaE</fullName>
    </recommendedName>
    <alternativeName>
        <fullName>t(6)A37 threonylcarbamoyladenosine biosynthesis protein TsaE</fullName>
    </alternativeName>
</protein>
<evidence type="ECO:0000250" key="1"/>
<evidence type="ECO:0000305" key="2"/>
<comment type="function">
    <text evidence="1">Required for the formation of a threonylcarbamoyl group on adenosine at position 37 (t(6)A37) in tRNAs that read codons beginning with adenine. Is involved in the transfer of the threonylcarbamoyl moiety of threonylcarbamoyl-AMP (TC-AMP) to the N6 group of A37, together with TsaD and TsaB. TsaE seems to play an indirect role in the t(6)A biosynthesis pathway, possibly in regulating the core enzymatic function of TsaD (By similarity).</text>
</comment>
<comment type="subcellular location">
    <subcellularLocation>
        <location evidence="1">Cytoplasm</location>
    </subcellularLocation>
</comment>
<comment type="similarity">
    <text evidence="2">Belongs to the TsaE family.</text>
</comment>
<accession>Q68XZ1</accession>
<feature type="chain" id="PRO_0000281043" description="tRNA threonylcarbamoyladenosine biosynthesis protein TsaE">
    <location>
        <begin position="1"/>
        <end position="144"/>
    </location>
</feature>
<feature type="binding site" evidence="1">
    <location>
        <position position="7"/>
    </location>
    <ligand>
        <name>ATP</name>
        <dbReference type="ChEBI" id="CHEBI:30616"/>
    </ligand>
</feature>
<feature type="binding site" evidence="1">
    <location>
        <begin position="34"/>
        <end position="39"/>
    </location>
    <ligand>
        <name>ATP</name>
        <dbReference type="ChEBI" id="CHEBI:30616"/>
    </ligand>
</feature>
<feature type="binding site" evidence="1">
    <location>
        <position position="38"/>
    </location>
    <ligand>
        <name>Mg(2+)</name>
        <dbReference type="ChEBI" id="CHEBI:18420"/>
    </ligand>
</feature>
<feature type="binding site" evidence="1">
    <location>
        <position position="104"/>
    </location>
    <ligand>
        <name>Mg(2+)</name>
        <dbReference type="ChEBI" id="CHEBI:18420"/>
    </ligand>
</feature>
<dbReference type="EMBL" id="AE017197">
    <property type="protein sequence ID" value="AAU03501.1"/>
    <property type="molecule type" value="Genomic_DNA"/>
</dbReference>
<dbReference type="RefSeq" id="WP_011190488.1">
    <property type="nucleotide sequence ID" value="NC_006142.1"/>
</dbReference>
<dbReference type="SMR" id="Q68XZ1"/>
<dbReference type="KEGG" id="rty:RT0012"/>
<dbReference type="eggNOG" id="COG0802">
    <property type="taxonomic scope" value="Bacteria"/>
</dbReference>
<dbReference type="HOGENOM" id="CLU_087829_5_0_5"/>
<dbReference type="OrthoDB" id="9800307at2"/>
<dbReference type="Proteomes" id="UP000000604">
    <property type="component" value="Chromosome"/>
</dbReference>
<dbReference type="GO" id="GO:0005737">
    <property type="term" value="C:cytoplasm"/>
    <property type="evidence" value="ECO:0007669"/>
    <property type="project" value="UniProtKB-SubCell"/>
</dbReference>
<dbReference type="GO" id="GO:0005524">
    <property type="term" value="F:ATP binding"/>
    <property type="evidence" value="ECO:0007669"/>
    <property type="project" value="UniProtKB-KW"/>
</dbReference>
<dbReference type="GO" id="GO:0046872">
    <property type="term" value="F:metal ion binding"/>
    <property type="evidence" value="ECO:0007669"/>
    <property type="project" value="UniProtKB-KW"/>
</dbReference>
<dbReference type="GO" id="GO:0002949">
    <property type="term" value="P:tRNA threonylcarbamoyladenosine modification"/>
    <property type="evidence" value="ECO:0007669"/>
    <property type="project" value="InterPro"/>
</dbReference>
<dbReference type="Gene3D" id="3.40.50.300">
    <property type="entry name" value="P-loop containing nucleotide triphosphate hydrolases"/>
    <property type="match status" value="1"/>
</dbReference>
<dbReference type="InterPro" id="IPR027417">
    <property type="entry name" value="P-loop_NTPase"/>
</dbReference>
<dbReference type="InterPro" id="IPR003442">
    <property type="entry name" value="T6A_TsaE"/>
</dbReference>
<dbReference type="NCBIfam" id="TIGR00150">
    <property type="entry name" value="T6A_YjeE"/>
    <property type="match status" value="1"/>
</dbReference>
<dbReference type="PANTHER" id="PTHR33540">
    <property type="entry name" value="TRNA THREONYLCARBAMOYLADENOSINE BIOSYNTHESIS PROTEIN TSAE"/>
    <property type="match status" value="1"/>
</dbReference>
<dbReference type="PANTHER" id="PTHR33540:SF2">
    <property type="entry name" value="TRNA THREONYLCARBAMOYLADENOSINE BIOSYNTHESIS PROTEIN TSAE"/>
    <property type="match status" value="1"/>
</dbReference>
<dbReference type="Pfam" id="PF02367">
    <property type="entry name" value="TsaE"/>
    <property type="match status" value="1"/>
</dbReference>
<dbReference type="SUPFAM" id="SSF52540">
    <property type="entry name" value="P-loop containing nucleoside triphosphate hydrolases"/>
    <property type="match status" value="1"/>
</dbReference>